<reference key="1">
    <citation type="journal article" date="2008" name="PLoS ONE">
        <title>Genome biology of Actinobacillus pleuropneumoniae JL03, an isolate of serotype 3 prevalent in China.</title>
        <authorList>
            <person name="Xu Z."/>
            <person name="Zhou Y."/>
            <person name="Li L."/>
            <person name="Zhou R."/>
            <person name="Xiao S."/>
            <person name="Wan Y."/>
            <person name="Zhang S."/>
            <person name="Wang K."/>
            <person name="Li W."/>
            <person name="Li L."/>
            <person name="Jin H."/>
            <person name="Kang M."/>
            <person name="Dalai B."/>
            <person name="Li T."/>
            <person name="Liu L."/>
            <person name="Cheng Y."/>
            <person name="Zhang L."/>
            <person name="Xu T."/>
            <person name="Zheng H."/>
            <person name="Pu S."/>
            <person name="Wang B."/>
            <person name="Gu W."/>
            <person name="Zhang X.L."/>
            <person name="Zhu G.-F."/>
            <person name="Wang S."/>
            <person name="Zhao G.-P."/>
            <person name="Chen H."/>
        </authorList>
    </citation>
    <scope>NUCLEOTIDE SEQUENCE [LARGE SCALE GENOMIC DNA]</scope>
    <source>
        <strain>JL03</strain>
    </source>
</reference>
<sequence length="199" mass="22250">MEQQETIHISISEAAQTHFRRLLEQQEENTNIRIFVVNPGTPNAECGVSYCPPNAVEETDTQFEYNGFSAFVDEISLPFLDEAEIDYVTDPMGSQLTLKAPNAKMRKVADDAPFIERLDYVIQTQVNPQLASHGGRVTLIEVTEDKYAILQFGGGCNGCSMVDVTLKEGIEKQLLAMFPDELAGVKDVTEHQRGEHSYY</sequence>
<dbReference type="EMBL" id="CP000687">
    <property type="protein sequence ID" value="ABY68754.1"/>
    <property type="molecule type" value="Genomic_DNA"/>
</dbReference>
<dbReference type="RefSeq" id="WP_005600176.1">
    <property type="nucleotide sequence ID" value="NC_010278.1"/>
</dbReference>
<dbReference type="SMR" id="B0BS54"/>
<dbReference type="KEGG" id="apj:APJL_0150"/>
<dbReference type="HOGENOM" id="CLU_094569_0_0_6"/>
<dbReference type="Proteomes" id="UP000008547">
    <property type="component" value="Chromosome"/>
</dbReference>
<dbReference type="GO" id="GO:0051539">
    <property type="term" value="F:4 iron, 4 sulfur cluster binding"/>
    <property type="evidence" value="ECO:0007669"/>
    <property type="project" value="UniProtKB-UniRule"/>
</dbReference>
<dbReference type="GO" id="GO:0005506">
    <property type="term" value="F:iron ion binding"/>
    <property type="evidence" value="ECO:0007669"/>
    <property type="project" value="InterPro"/>
</dbReference>
<dbReference type="GO" id="GO:0016226">
    <property type="term" value="P:iron-sulfur cluster assembly"/>
    <property type="evidence" value="ECO:0007669"/>
    <property type="project" value="UniProtKB-UniRule"/>
</dbReference>
<dbReference type="GO" id="GO:0051604">
    <property type="term" value="P:protein maturation"/>
    <property type="evidence" value="ECO:0007669"/>
    <property type="project" value="UniProtKB-UniRule"/>
</dbReference>
<dbReference type="Gene3D" id="3.30.300.130">
    <property type="entry name" value="Fe-S cluster assembly (FSCA)"/>
    <property type="match status" value="1"/>
</dbReference>
<dbReference type="Gene3D" id="2.60.300.12">
    <property type="entry name" value="HesB-like domain"/>
    <property type="match status" value="1"/>
</dbReference>
<dbReference type="HAMAP" id="MF_01637">
    <property type="entry name" value="Fe_S_biogen_NfuA"/>
    <property type="match status" value="1"/>
</dbReference>
<dbReference type="InterPro" id="IPR017726">
    <property type="entry name" value="Fe/S_biogenesis_protein_NfuA"/>
</dbReference>
<dbReference type="InterPro" id="IPR000361">
    <property type="entry name" value="FeS_biogenesis"/>
</dbReference>
<dbReference type="InterPro" id="IPR034904">
    <property type="entry name" value="FSCA_dom_sf"/>
</dbReference>
<dbReference type="InterPro" id="IPR035903">
    <property type="entry name" value="HesB-like_dom_sf"/>
</dbReference>
<dbReference type="InterPro" id="IPR001075">
    <property type="entry name" value="NIF_FeS_clus_asmbl_NifU_C"/>
</dbReference>
<dbReference type="NCBIfam" id="NF008392">
    <property type="entry name" value="PRK11190.1"/>
    <property type="match status" value="1"/>
</dbReference>
<dbReference type="NCBIfam" id="TIGR03341">
    <property type="entry name" value="YhgI_GntY"/>
    <property type="match status" value="1"/>
</dbReference>
<dbReference type="PANTHER" id="PTHR11178:SF51">
    <property type="entry name" value="FE_S BIOGENESIS PROTEIN NFUA"/>
    <property type="match status" value="1"/>
</dbReference>
<dbReference type="PANTHER" id="PTHR11178">
    <property type="entry name" value="IRON-SULFUR CLUSTER SCAFFOLD PROTEIN NFU-RELATED"/>
    <property type="match status" value="1"/>
</dbReference>
<dbReference type="Pfam" id="PF01521">
    <property type="entry name" value="Fe-S_biosyn"/>
    <property type="match status" value="1"/>
</dbReference>
<dbReference type="Pfam" id="PF01106">
    <property type="entry name" value="NifU"/>
    <property type="match status" value="1"/>
</dbReference>
<dbReference type="SUPFAM" id="SSF117916">
    <property type="entry name" value="Fe-S cluster assembly (FSCA) domain-like"/>
    <property type="match status" value="1"/>
</dbReference>
<dbReference type="SUPFAM" id="SSF89360">
    <property type="entry name" value="HesB-like domain"/>
    <property type="match status" value="1"/>
</dbReference>
<comment type="function">
    <text evidence="1">Involved in iron-sulfur cluster biogenesis. Binds a 4Fe-4S cluster, can transfer this cluster to apoproteins, and thereby intervenes in the maturation of Fe/S proteins. Could also act as a scaffold/chaperone for damaged Fe/S proteins.</text>
</comment>
<comment type="cofactor">
    <cofactor evidence="1">
        <name>[4Fe-4S] cluster</name>
        <dbReference type="ChEBI" id="CHEBI:49883"/>
    </cofactor>
    <text evidence="1">Binds 1 [4Fe-4S] cluster per subunit. The cluster is presumably bound at the interface of two monomers.</text>
</comment>
<comment type="subunit">
    <text evidence="1">Homodimer.</text>
</comment>
<comment type="similarity">
    <text evidence="1">Belongs to the NfuA family.</text>
</comment>
<gene>
    <name evidence="1" type="primary">nfuA</name>
    <name type="ordered locus">APJL_0150</name>
</gene>
<name>NFUA_ACTPJ</name>
<protein>
    <recommendedName>
        <fullName evidence="1">Fe/S biogenesis protein NfuA</fullName>
    </recommendedName>
</protein>
<accession>B0BS54</accession>
<evidence type="ECO:0000255" key="1">
    <source>
        <dbReference type="HAMAP-Rule" id="MF_01637"/>
    </source>
</evidence>
<keyword id="KW-0004">4Fe-4S</keyword>
<keyword id="KW-0408">Iron</keyword>
<keyword id="KW-0411">Iron-sulfur</keyword>
<keyword id="KW-0479">Metal-binding</keyword>
<organism>
    <name type="scientific">Actinobacillus pleuropneumoniae serotype 3 (strain JL03)</name>
    <dbReference type="NCBI Taxonomy" id="434271"/>
    <lineage>
        <taxon>Bacteria</taxon>
        <taxon>Pseudomonadati</taxon>
        <taxon>Pseudomonadota</taxon>
        <taxon>Gammaproteobacteria</taxon>
        <taxon>Pasteurellales</taxon>
        <taxon>Pasteurellaceae</taxon>
        <taxon>Actinobacillus</taxon>
    </lineage>
</organism>
<proteinExistence type="inferred from homology"/>
<feature type="chain" id="PRO_1000186734" description="Fe/S biogenesis protein NfuA">
    <location>
        <begin position="1"/>
        <end position="199"/>
    </location>
</feature>
<feature type="binding site" evidence="1">
    <location>
        <position position="156"/>
    </location>
    <ligand>
        <name>[4Fe-4S] cluster</name>
        <dbReference type="ChEBI" id="CHEBI:49883"/>
    </ligand>
</feature>
<feature type="binding site" evidence="1">
    <location>
        <position position="159"/>
    </location>
    <ligand>
        <name>[4Fe-4S] cluster</name>
        <dbReference type="ChEBI" id="CHEBI:49883"/>
    </ligand>
</feature>